<keyword id="KW-0012">Acyltransferase</keyword>
<keyword id="KW-1003">Cell membrane</keyword>
<keyword id="KW-0333">Golgi apparatus</keyword>
<keyword id="KW-0449">Lipoprotein</keyword>
<keyword id="KW-0472">Membrane</keyword>
<keyword id="KW-0564">Palmitate</keyword>
<keyword id="KW-1185">Reference proteome</keyword>
<keyword id="KW-0808">Transferase</keyword>
<keyword id="KW-0812">Transmembrane</keyword>
<keyword id="KW-1133">Transmembrane helix</keyword>
<gene>
    <name evidence="9 12" type="primary">zdhhc21</name>
    <name evidence="8" type="synonym">dhcc21</name>
    <name evidence="11" type="ORF">zgc:158420</name>
</gene>
<organism evidence="11">
    <name type="scientific">Danio rerio</name>
    <name type="common">Zebrafish</name>
    <name type="synonym">Brachydanio rerio</name>
    <dbReference type="NCBI Taxonomy" id="7955"/>
    <lineage>
        <taxon>Eukaryota</taxon>
        <taxon>Metazoa</taxon>
        <taxon>Chordata</taxon>
        <taxon>Craniata</taxon>
        <taxon>Vertebrata</taxon>
        <taxon>Euteleostomi</taxon>
        <taxon>Actinopterygii</taxon>
        <taxon>Neopterygii</taxon>
        <taxon>Teleostei</taxon>
        <taxon>Ostariophysi</taxon>
        <taxon>Cypriniformes</taxon>
        <taxon>Danionidae</taxon>
        <taxon>Danioninae</taxon>
        <taxon>Danio</taxon>
    </lineage>
</organism>
<sequence>MKMRLHFVVDPMGWFCMSMVFFVWIYNSFLIPKLVLLPHYAEGHITAEPVICYYLASLLCFSALFRASTTDPGKLAQDPKIPLAERDNWELCNKCNMMRPKRSHHCSRCGHCVRRMDHHCPWINNCVGEDNHWLFLQLCFYTQVLSFYTLVLDFCQYYYFLPLSSVDQADFAVHHELALLRVSCFMGLIMFGGISSLFYTQVKGILTDTTTIEKMSHLTEEVPRRPWQQAMAEVFGTRWKVLWFLPFRSRHPLKLNLTIRSHV</sequence>
<dbReference type="EC" id="2.3.1.225" evidence="2"/>
<dbReference type="EMBL" id="BC160605">
    <property type="protein sequence ID" value="AAI60605.1"/>
    <property type="molecule type" value="mRNA"/>
</dbReference>
<dbReference type="EMBL" id="CABZ01067984">
    <property type="status" value="NOT_ANNOTATED_CDS"/>
    <property type="molecule type" value="Genomic_DNA"/>
</dbReference>
<dbReference type="EMBL" id="CR536621">
    <property type="status" value="NOT_ANNOTATED_CDS"/>
    <property type="molecule type" value="Genomic_DNA"/>
</dbReference>
<dbReference type="RefSeq" id="NP_001116527.1">
    <property type="nucleotide sequence ID" value="NM_001123055.1"/>
</dbReference>
<dbReference type="SMR" id="B1H1H3"/>
<dbReference type="FunCoup" id="B1H1H3">
    <property type="interactions" value="1420"/>
</dbReference>
<dbReference type="STRING" id="7955.ENSDARP00000148543"/>
<dbReference type="PaxDb" id="7955-ENSDARP00000097603"/>
<dbReference type="GeneID" id="100144560"/>
<dbReference type="KEGG" id="dre:100144560"/>
<dbReference type="AGR" id="ZFIN:ZDB-GENE-080401-2"/>
<dbReference type="CTD" id="340481"/>
<dbReference type="ZFIN" id="ZDB-GENE-080401-2">
    <property type="gene designation" value="zdhhc21"/>
</dbReference>
<dbReference type="InParanoid" id="B1H1H3"/>
<dbReference type="OrthoDB" id="331948at2759"/>
<dbReference type="PhylomeDB" id="B1H1H3"/>
<dbReference type="Reactome" id="R-DRE-9009391">
    <property type="pathway name" value="Extra-nuclear estrogen signaling"/>
</dbReference>
<dbReference type="PRO" id="PR:B1H1H3"/>
<dbReference type="Proteomes" id="UP000000437">
    <property type="component" value="Chromosome 7"/>
</dbReference>
<dbReference type="GO" id="GO:0005783">
    <property type="term" value="C:endoplasmic reticulum"/>
    <property type="evidence" value="ECO:0000318"/>
    <property type="project" value="GO_Central"/>
</dbReference>
<dbReference type="GO" id="GO:0005794">
    <property type="term" value="C:Golgi apparatus"/>
    <property type="evidence" value="ECO:0000318"/>
    <property type="project" value="GO_Central"/>
</dbReference>
<dbReference type="GO" id="GO:0000139">
    <property type="term" value="C:Golgi membrane"/>
    <property type="evidence" value="ECO:0007669"/>
    <property type="project" value="UniProtKB-SubCell"/>
</dbReference>
<dbReference type="GO" id="GO:0005886">
    <property type="term" value="C:plasma membrane"/>
    <property type="evidence" value="ECO:0007669"/>
    <property type="project" value="UniProtKB-SubCell"/>
</dbReference>
<dbReference type="GO" id="GO:0019706">
    <property type="term" value="F:protein-cysteine S-palmitoyltransferase activity"/>
    <property type="evidence" value="ECO:0000250"/>
    <property type="project" value="UniProtKB"/>
</dbReference>
<dbReference type="GO" id="GO:0018230">
    <property type="term" value="P:peptidyl-L-cysteine S-palmitoylation"/>
    <property type="evidence" value="ECO:0000250"/>
    <property type="project" value="UniProtKB"/>
</dbReference>
<dbReference type="GO" id="GO:0006612">
    <property type="term" value="P:protein targeting to membrane"/>
    <property type="evidence" value="ECO:0000318"/>
    <property type="project" value="GO_Central"/>
</dbReference>
<dbReference type="InterPro" id="IPR001594">
    <property type="entry name" value="Palmitoyltrfase_DHHC"/>
</dbReference>
<dbReference type="InterPro" id="IPR039859">
    <property type="entry name" value="PFA4/ZDH16/20/ERF2-like"/>
</dbReference>
<dbReference type="PANTHER" id="PTHR22883:SF11">
    <property type="entry name" value="PALMITOYLTRANSFERASE ZDHHC21"/>
    <property type="match status" value="1"/>
</dbReference>
<dbReference type="PANTHER" id="PTHR22883">
    <property type="entry name" value="ZINC FINGER DHHC DOMAIN CONTAINING PROTEIN"/>
    <property type="match status" value="1"/>
</dbReference>
<dbReference type="Pfam" id="PF01529">
    <property type="entry name" value="DHHC"/>
    <property type="match status" value="1"/>
</dbReference>
<dbReference type="PROSITE" id="PS50216">
    <property type="entry name" value="DHHC"/>
    <property type="match status" value="1"/>
</dbReference>
<proteinExistence type="evidence at transcript level"/>
<reference key="1">
    <citation type="submission" date="2008-03" db="EMBL/GenBank/DDBJ databases">
        <authorList>
            <consortium name="NIH - Zebrafish Gene Collection (ZGC) project"/>
        </authorList>
    </citation>
    <scope>NUCLEOTIDE SEQUENCE [LARGE SCALE MRNA]</scope>
    <source>
        <tissue>Kidney</tissue>
    </source>
</reference>
<reference key="2">
    <citation type="journal article" date="2013" name="Nature">
        <title>The zebrafish reference genome sequence and its relationship to the human genome.</title>
        <authorList>
            <person name="Howe K."/>
            <person name="Clark M.D."/>
            <person name="Torroja C.F."/>
            <person name="Torrance J."/>
            <person name="Berthelot C."/>
            <person name="Muffato M."/>
            <person name="Collins J.E."/>
            <person name="Humphray S."/>
            <person name="McLaren K."/>
            <person name="Matthews L."/>
            <person name="McLaren S."/>
            <person name="Sealy I."/>
            <person name="Caccamo M."/>
            <person name="Churcher C."/>
            <person name="Scott C."/>
            <person name="Barrett J.C."/>
            <person name="Koch R."/>
            <person name="Rauch G.J."/>
            <person name="White S."/>
            <person name="Chow W."/>
            <person name="Kilian B."/>
            <person name="Quintais L.T."/>
            <person name="Guerra-Assuncao J.A."/>
            <person name="Zhou Y."/>
            <person name="Gu Y."/>
            <person name="Yen J."/>
            <person name="Vogel J.H."/>
            <person name="Eyre T."/>
            <person name="Redmond S."/>
            <person name="Banerjee R."/>
            <person name="Chi J."/>
            <person name="Fu B."/>
            <person name="Langley E."/>
            <person name="Maguire S.F."/>
            <person name="Laird G.K."/>
            <person name="Lloyd D."/>
            <person name="Kenyon E."/>
            <person name="Donaldson S."/>
            <person name="Sehra H."/>
            <person name="Almeida-King J."/>
            <person name="Loveland J."/>
            <person name="Trevanion S."/>
            <person name="Jones M."/>
            <person name="Quail M."/>
            <person name="Willey D."/>
            <person name="Hunt A."/>
            <person name="Burton J."/>
            <person name="Sims S."/>
            <person name="McLay K."/>
            <person name="Plumb B."/>
            <person name="Davis J."/>
            <person name="Clee C."/>
            <person name="Oliver K."/>
            <person name="Clark R."/>
            <person name="Riddle C."/>
            <person name="Elliot D."/>
            <person name="Threadgold G."/>
            <person name="Harden G."/>
            <person name="Ware D."/>
            <person name="Begum S."/>
            <person name="Mortimore B."/>
            <person name="Kerry G."/>
            <person name="Heath P."/>
            <person name="Phillimore B."/>
            <person name="Tracey A."/>
            <person name="Corby N."/>
            <person name="Dunn M."/>
            <person name="Johnson C."/>
            <person name="Wood J."/>
            <person name="Clark S."/>
            <person name="Pelan S."/>
            <person name="Griffiths G."/>
            <person name="Smith M."/>
            <person name="Glithero R."/>
            <person name="Howden P."/>
            <person name="Barker N."/>
            <person name="Lloyd C."/>
            <person name="Stevens C."/>
            <person name="Harley J."/>
            <person name="Holt K."/>
            <person name="Panagiotidis G."/>
            <person name="Lovell J."/>
            <person name="Beasley H."/>
            <person name="Henderson C."/>
            <person name="Gordon D."/>
            <person name="Auger K."/>
            <person name="Wright D."/>
            <person name="Collins J."/>
            <person name="Raisen C."/>
            <person name="Dyer L."/>
            <person name="Leung K."/>
            <person name="Robertson L."/>
            <person name="Ambridge K."/>
            <person name="Leongamornlert D."/>
            <person name="McGuire S."/>
            <person name="Gilderthorp R."/>
            <person name="Griffiths C."/>
            <person name="Manthravadi D."/>
            <person name="Nichol S."/>
            <person name="Barker G."/>
            <person name="Whitehead S."/>
            <person name="Kay M."/>
            <person name="Brown J."/>
            <person name="Murnane C."/>
            <person name="Gray E."/>
            <person name="Humphries M."/>
            <person name="Sycamore N."/>
            <person name="Barker D."/>
            <person name="Saunders D."/>
            <person name="Wallis J."/>
            <person name="Babbage A."/>
            <person name="Hammond S."/>
            <person name="Mashreghi-Mohammadi M."/>
            <person name="Barr L."/>
            <person name="Martin S."/>
            <person name="Wray P."/>
            <person name="Ellington A."/>
            <person name="Matthews N."/>
            <person name="Ellwood M."/>
            <person name="Woodmansey R."/>
            <person name="Clark G."/>
            <person name="Cooper J."/>
            <person name="Tromans A."/>
            <person name="Grafham D."/>
            <person name="Skuce C."/>
            <person name="Pandian R."/>
            <person name="Andrews R."/>
            <person name="Harrison E."/>
            <person name="Kimberley A."/>
            <person name="Garnett J."/>
            <person name="Fosker N."/>
            <person name="Hall R."/>
            <person name="Garner P."/>
            <person name="Kelly D."/>
            <person name="Bird C."/>
            <person name="Palmer S."/>
            <person name="Gehring I."/>
            <person name="Berger A."/>
            <person name="Dooley C.M."/>
            <person name="Ersan-Urun Z."/>
            <person name="Eser C."/>
            <person name="Geiger H."/>
            <person name="Geisler M."/>
            <person name="Karotki L."/>
            <person name="Kirn A."/>
            <person name="Konantz J."/>
            <person name="Konantz M."/>
            <person name="Oberlander M."/>
            <person name="Rudolph-Geiger S."/>
            <person name="Teucke M."/>
            <person name="Lanz C."/>
            <person name="Raddatz G."/>
            <person name="Osoegawa K."/>
            <person name="Zhu B."/>
            <person name="Rapp A."/>
            <person name="Widaa S."/>
            <person name="Langford C."/>
            <person name="Yang F."/>
            <person name="Schuster S.C."/>
            <person name="Carter N.P."/>
            <person name="Harrow J."/>
            <person name="Ning Z."/>
            <person name="Herrero J."/>
            <person name="Searle S.M."/>
            <person name="Enright A."/>
            <person name="Geisler R."/>
            <person name="Plasterk R.H."/>
            <person name="Lee C."/>
            <person name="Westerfield M."/>
            <person name="de Jong P.J."/>
            <person name="Zon L.I."/>
            <person name="Postlethwait J.H."/>
            <person name="Nusslein-Volhard C."/>
            <person name="Hubbard T.J."/>
            <person name="Roest Crollius H."/>
            <person name="Rogers J."/>
            <person name="Stemple D.L."/>
        </authorList>
    </citation>
    <scope>NUCLEOTIDE SEQUENCE [LARGE SCALE GENOMIC DNA] OF 123-263</scope>
    <source>
        <strain>Tuebingen</strain>
    </source>
</reference>
<reference key="3">
    <citation type="journal article" date="2015" name="Neurotoxicol. Teratol.">
        <title>2-Bromopalmitate impairs neural stem/progenitor cell proliferation, promotes cell apoptosis and induces malformation in zebrafish embryonic brain.</title>
        <authorList>
            <person name="Wang C."/>
            <person name="Chen X."/>
            <person name="Shi W."/>
            <person name="Wang F."/>
            <person name="Du Z."/>
            <person name="Li X."/>
            <person name="Yao Y."/>
            <person name="Liu T."/>
            <person name="Shao T."/>
            <person name="Li G."/>
            <person name="Hao A."/>
        </authorList>
    </citation>
    <scope>DEVELOPMENTAL STAGE</scope>
</reference>
<reference key="4">
    <citation type="journal article" date="2016" name="Biochem. Biophys. Res. Commun.">
        <title>Protein palmitoylation activate zygotic gene expression during the maternal-to-zygotic transition.</title>
        <authorList>
            <person name="Du Z."/>
            <person name="Chen X."/>
            <person name="Li X."/>
            <person name="He K."/>
            <person name="Ji S."/>
            <person name="Shi W."/>
            <person name="Hao A."/>
        </authorList>
    </citation>
    <scope>DEVELOPMENTAL STAGE</scope>
</reference>
<feature type="chain" id="PRO_0000451163" description="Palmitoyltransferase ZDHHC21">
    <location>
        <begin position="1"/>
        <end position="263"/>
    </location>
</feature>
<feature type="topological domain" description="Cytoplasmic" evidence="10">
    <location>
        <begin position="1"/>
        <end position="4"/>
    </location>
</feature>
<feature type="transmembrane region" description="Helical" evidence="4">
    <location>
        <begin position="5"/>
        <end position="25"/>
    </location>
</feature>
<feature type="topological domain" description="Extracellular" evidence="10">
    <location>
        <begin position="26"/>
        <end position="44"/>
    </location>
</feature>
<feature type="transmembrane region" description="Helical" evidence="4">
    <location>
        <begin position="45"/>
        <end position="65"/>
    </location>
</feature>
<feature type="topological domain" description="Cytoplasmic" evidence="10">
    <location>
        <begin position="66"/>
        <end position="131"/>
    </location>
</feature>
<feature type="transmembrane region" description="Helical" evidence="4">
    <location>
        <begin position="132"/>
        <end position="152"/>
    </location>
</feature>
<feature type="topological domain" description="Extracellular" evidence="10">
    <location>
        <begin position="153"/>
        <end position="181"/>
    </location>
</feature>
<feature type="transmembrane region" description="Helical" evidence="4">
    <location>
        <begin position="182"/>
        <end position="202"/>
    </location>
</feature>
<feature type="topological domain" description="Cytoplasmic" evidence="10">
    <location>
        <begin position="203"/>
        <end position="263"/>
    </location>
</feature>
<feature type="domain" description="DHHC" evidence="5">
    <location>
        <begin position="90"/>
        <end position="140"/>
    </location>
</feature>
<feature type="active site" description="S-palmitoyl cysteine intermediate" evidence="3">
    <location>
        <position position="120"/>
    </location>
</feature>
<feature type="sequence conflict" description="In Ref. 1; AAI60605." evidence="10" ref="1">
    <original>K</original>
    <variation>R</variation>
    <location>
        <position position="254"/>
    </location>
</feature>
<comment type="function">
    <text evidence="3">Palmitoyltransferase that catalyzes the addition of palmitate onto various protein substrates.</text>
</comment>
<comment type="catalytic activity">
    <reaction evidence="3">
        <text>L-cysteinyl-[protein] + hexadecanoyl-CoA = S-hexadecanoyl-L-cysteinyl-[protein] + CoA</text>
        <dbReference type="Rhea" id="RHEA:36683"/>
        <dbReference type="Rhea" id="RHEA-COMP:10131"/>
        <dbReference type="Rhea" id="RHEA-COMP:11032"/>
        <dbReference type="ChEBI" id="CHEBI:29950"/>
        <dbReference type="ChEBI" id="CHEBI:57287"/>
        <dbReference type="ChEBI" id="CHEBI:57379"/>
        <dbReference type="ChEBI" id="CHEBI:74151"/>
        <dbReference type="EC" id="2.3.1.225"/>
    </reaction>
    <physiologicalReaction direction="left-to-right" evidence="3">
        <dbReference type="Rhea" id="RHEA:36684"/>
    </physiologicalReaction>
</comment>
<comment type="subcellular location">
    <subcellularLocation>
        <location evidence="2">Golgi apparatus membrane</location>
        <topology evidence="4">Multi-pass membrane protein</topology>
    </subcellularLocation>
    <subcellularLocation>
        <location evidence="3">Golgi apparatus</location>
        <location evidence="3">cis-Golgi network membrane</location>
        <topology evidence="4">Multi-pass membrane protein</topology>
    </subcellularLocation>
    <subcellularLocation>
        <location evidence="2">Cell membrane</location>
        <topology evidence="4">Multi-pass membrane protein</topology>
    </subcellularLocation>
</comment>
<comment type="developmental stage">
    <text evidence="6 7">Probably maternally supplied, the zygotic expression becomes significant at 4.0 hpf and remains constant until 24 hpf.</text>
</comment>
<comment type="domain">
    <text evidence="1">The DHHC domain is required for palmitoyltransferase activity.</text>
</comment>
<comment type="similarity">
    <text evidence="10">Belongs to the DHHC palmitoyltransferase family.</text>
</comment>
<evidence type="ECO:0000250" key="1">
    <source>
        <dbReference type="UniProtKB" id="Q8IUH5"/>
    </source>
</evidence>
<evidence type="ECO:0000250" key="2">
    <source>
        <dbReference type="UniProtKB" id="Q8IVQ6"/>
    </source>
</evidence>
<evidence type="ECO:0000250" key="3">
    <source>
        <dbReference type="UniProtKB" id="Q9D270"/>
    </source>
</evidence>
<evidence type="ECO:0000255" key="4"/>
<evidence type="ECO:0000255" key="5">
    <source>
        <dbReference type="PROSITE-ProRule" id="PRU00067"/>
    </source>
</evidence>
<evidence type="ECO:0000269" key="6">
    <source>
    </source>
</evidence>
<evidence type="ECO:0000269" key="7">
    <source>
    </source>
</evidence>
<evidence type="ECO:0000303" key="8">
    <source>
    </source>
</evidence>
<evidence type="ECO:0000303" key="9">
    <source>
    </source>
</evidence>
<evidence type="ECO:0000305" key="10"/>
<evidence type="ECO:0000312" key="11">
    <source>
        <dbReference type="EMBL" id="AAI60605.1"/>
    </source>
</evidence>
<evidence type="ECO:0000312" key="12">
    <source>
        <dbReference type="ZFIN" id="ZDB-GENE-080401-2"/>
    </source>
</evidence>
<name>ZDH21_DANRE</name>
<accession>B1H1H3</accession>
<accession>A0A2R8RMA6</accession>
<protein>
    <recommendedName>
        <fullName evidence="10">Palmitoyltransferase ZDHHC21</fullName>
        <ecNumber evidence="2">2.3.1.225</ecNumber>
    </recommendedName>
    <alternativeName>
        <fullName evidence="8">DHHC domain-containing cysteine-rich protein 21</fullName>
    </alternativeName>
    <alternativeName>
        <fullName evidence="9 12">Zinc finger DHHC domain-containing protein 21</fullName>
    </alternativeName>
</protein>